<organism>
    <name type="scientific">Rickettsia felis (strain ATCC VR-1525 / URRWXCal2)</name>
    <name type="common">Rickettsia azadi</name>
    <dbReference type="NCBI Taxonomy" id="315456"/>
    <lineage>
        <taxon>Bacteria</taxon>
        <taxon>Pseudomonadati</taxon>
        <taxon>Pseudomonadota</taxon>
        <taxon>Alphaproteobacteria</taxon>
        <taxon>Rickettsiales</taxon>
        <taxon>Rickettsiaceae</taxon>
        <taxon>Rickettsieae</taxon>
        <taxon>Rickettsia</taxon>
        <taxon>spotted fever group</taxon>
    </lineage>
</organism>
<feature type="chain" id="PRO_0000272631" description="6-carboxy-5,6,7,8-tetrahydropterin synthase">
    <location>
        <begin position="1"/>
        <end position="138"/>
    </location>
</feature>
<feature type="active site" description="Proton acceptor" evidence="1">
    <location>
        <position position="23"/>
    </location>
</feature>
<feature type="active site" description="Charge relay system" evidence="1">
    <location>
        <position position="68"/>
    </location>
</feature>
<feature type="active site" description="Charge relay system" evidence="1">
    <location>
        <position position="130"/>
    </location>
</feature>
<feature type="binding site" evidence="1">
    <location>
        <position position="14"/>
    </location>
    <ligand>
        <name>Zn(2+)</name>
        <dbReference type="ChEBI" id="CHEBI:29105"/>
    </ligand>
</feature>
<feature type="binding site" evidence="1">
    <location>
        <position position="27"/>
    </location>
    <ligand>
        <name>Zn(2+)</name>
        <dbReference type="ChEBI" id="CHEBI:29105"/>
    </ligand>
</feature>
<feature type="binding site" evidence="1">
    <location>
        <position position="29"/>
    </location>
    <ligand>
        <name>Zn(2+)</name>
        <dbReference type="ChEBI" id="CHEBI:29105"/>
    </ligand>
</feature>
<comment type="function">
    <text evidence="1">Catalyzes the conversion of 7,8-dihydroneopterin triphosphate (H2NTP) to 6-carboxy-5,6,7,8-tetrahydropterin (CPH4) and acetaldehyde.</text>
</comment>
<comment type="catalytic activity">
    <reaction>
        <text>7,8-dihydroneopterin 3'-triphosphate + H2O = 6-carboxy-5,6,7,8-tetrahydropterin + triphosphate + acetaldehyde + 2 H(+)</text>
        <dbReference type="Rhea" id="RHEA:27966"/>
        <dbReference type="ChEBI" id="CHEBI:15343"/>
        <dbReference type="ChEBI" id="CHEBI:15377"/>
        <dbReference type="ChEBI" id="CHEBI:15378"/>
        <dbReference type="ChEBI" id="CHEBI:18036"/>
        <dbReference type="ChEBI" id="CHEBI:58462"/>
        <dbReference type="ChEBI" id="CHEBI:61032"/>
        <dbReference type="EC" id="4.1.2.50"/>
    </reaction>
</comment>
<comment type="cofactor">
    <cofactor evidence="1">
        <name>Zn(2+)</name>
        <dbReference type="ChEBI" id="CHEBI:29105"/>
    </cofactor>
    <text evidence="1">Binds 1 zinc ion per subunit.</text>
</comment>
<comment type="pathway">
    <text>Purine metabolism; 7-cyano-7-deazaguanine biosynthesis.</text>
</comment>
<comment type="miscellaneous">
    <text evidence="1">The active site is at the interface between 2 subunits. The proton acceptor Cys is on one subunit, and the charge relay system is on the other subunit (By similarity).</text>
</comment>
<comment type="similarity">
    <text evidence="2">Belongs to the PTPS family. QueD subfamily.</text>
</comment>
<name>QUED_RICFE</name>
<keyword id="KW-0456">Lyase</keyword>
<keyword id="KW-0479">Metal-binding</keyword>
<keyword id="KW-0671">Queuosine biosynthesis</keyword>
<keyword id="KW-0862">Zinc</keyword>
<evidence type="ECO:0000250" key="1"/>
<evidence type="ECO:0000305" key="2"/>
<proteinExistence type="inferred from homology"/>
<sequence length="138" mass="16040">MIKCTRRIEFDAGHRIIGHQNKCQFLHGHRYVLEIAIAANKTDKLGMVIDFGLIKDVAKKWIDENFDHSLILHQDDKEMGQQIENCTGQKIYYMQNNPTAENIATHLKNEIFPKLFVGQNFFVSNLKLYETPNCFVEV</sequence>
<protein>
    <recommendedName>
        <fullName>6-carboxy-5,6,7,8-tetrahydropterin synthase</fullName>
        <shortName>CPH4 synthase</shortName>
        <ecNumber>4.1.2.50</ecNumber>
    </recommendedName>
    <alternativeName>
        <fullName>Queuosine biosynthesis protein QueD</fullName>
    </alternativeName>
</protein>
<reference key="1">
    <citation type="journal article" date="2005" name="PLoS Biol.">
        <title>The genome sequence of Rickettsia felis identifies the first putative conjugative plasmid in an obligate intracellular parasite.</title>
        <authorList>
            <person name="Ogata H."/>
            <person name="Renesto P."/>
            <person name="Audic S."/>
            <person name="Robert C."/>
            <person name="Blanc G."/>
            <person name="Fournier P.-E."/>
            <person name="Parinello H."/>
            <person name="Claverie J.-M."/>
            <person name="Raoult D."/>
        </authorList>
    </citation>
    <scope>NUCLEOTIDE SEQUENCE [LARGE SCALE GENOMIC DNA]</scope>
    <source>
        <strain>ATCC VR-1525 / URRWXCal2</strain>
    </source>
</reference>
<accession>Q4UKI6</accession>
<gene>
    <name type="primary">queD</name>
    <name type="ordered locus">RF_1094</name>
</gene>
<dbReference type="EC" id="4.1.2.50"/>
<dbReference type="EMBL" id="CP000053">
    <property type="protein sequence ID" value="AAY61945.1"/>
    <property type="molecule type" value="Genomic_DNA"/>
</dbReference>
<dbReference type="SMR" id="Q4UKI6"/>
<dbReference type="STRING" id="315456.RF_1094"/>
<dbReference type="KEGG" id="rfe:RF_1094"/>
<dbReference type="eggNOG" id="COG0720">
    <property type="taxonomic scope" value="Bacteria"/>
</dbReference>
<dbReference type="HOGENOM" id="CLU_111016_1_1_5"/>
<dbReference type="OrthoDB" id="9804698at2"/>
<dbReference type="UniPathway" id="UPA00391"/>
<dbReference type="Proteomes" id="UP000008548">
    <property type="component" value="Chromosome"/>
</dbReference>
<dbReference type="GO" id="GO:0070497">
    <property type="term" value="F:6-carboxytetrahydropterin synthase activity"/>
    <property type="evidence" value="ECO:0007669"/>
    <property type="project" value="UniProtKB-EC"/>
</dbReference>
<dbReference type="GO" id="GO:0046872">
    <property type="term" value="F:metal ion binding"/>
    <property type="evidence" value="ECO:0007669"/>
    <property type="project" value="UniProtKB-KW"/>
</dbReference>
<dbReference type="GO" id="GO:0008616">
    <property type="term" value="P:queuosine biosynthetic process"/>
    <property type="evidence" value="ECO:0007669"/>
    <property type="project" value="UniProtKB-KW"/>
</dbReference>
<dbReference type="Gene3D" id="3.30.479.10">
    <property type="entry name" value="6-pyruvoyl tetrahydropterin synthase/QueD"/>
    <property type="match status" value="1"/>
</dbReference>
<dbReference type="InterPro" id="IPR007115">
    <property type="entry name" value="6-PTP_synth/QueD"/>
</dbReference>
<dbReference type="InterPro" id="IPR038418">
    <property type="entry name" value="6-PTP_synth/QueD_sf"/>
</dbReference>
<dbReference type="PANTHER" id="PTHR12589:SF7">
    <property type="entry name" value="6-PYRUVOYL TETRAHYDROBIOPTERIN SYNTHASE"/>
    <property type="match status" value="1"/>
</dbReference>
<dbReference type="PANTHER" id="PTHR12589">
    <property type="entry name" value="PYRUVOYL TETRAHYDROBIOPTERIN SYNTHASE"/>
    <property type="match status" value="1"/>
</dbReference>
<dbReference type="Pfam" id="PF01242">
    <property type="entry name" value="PTPS"/>
    <property type="match status" value="1"/>
</dbReference>
<dbReference type="SUPFAM" id="SSF55620">
    <property type="entry name" value="Tetrahydrobiopterin biosynthesis enzymes-like"/>
    <property type="match status" value="1"/>
</dbReference>